<organism>
    <name type="scientific">Chlorobium luteolum (strain DSM 273 / BCRC 81028 / 2530)</name>
    <name type="common">Pelodictyon luteolum</name>
    <dbReference type="NCBI Taxonomy" id="319225"/>
    <lineage>
        <taxon>Bacteria</taxon>
        <taxon>Pseudomonadati</taxon>
        <taxon>Chlorobiota</taxon>
        <taxon>Chlorobiia</taxon>
        <taxon>Chlorobiales</taxon>
        <taxon>Chlorobiaceae</taxon>
        <taxon>Chlorobium/Pelodictyon group</taxon>
        <taxon>Pelodictyon</taxon>
    </lineage>
</organism>
<proteinExistence type="inferred from homology"/>
<sequence length="202" mass="21517">METIVLGVAPREIKKNAAGKLRKTGEVPAVVYHKGEATIAVSVNEIALNKLVHSAESHIIDLKFPDGNVKRSFIKDVQFDPVTDRVIHTDFQLVSANEVIEMDVPVAVEGDAIGVEKGGKLQIIRHSLTVKGKPGDMPAHVTIDVTALEIGHSIHVREIPATAFPGLEIMDDRDTPVVTVLASKKEAEATEAVAGATPEGAA</sequence>
<name>RL25_CHLL3</name>
<feature type="chain" id="PRO_0000244224" description="Large ribosomal subunit protein bL25">
    <location>
        <begin position="1"/>
        <end position="202"/>
    </location>
</feature>
<protein>
    <recommendedName>
        <fullName evidence="1">Large ribosomal subunit protein bL25</fullName>
    </recommendedName>
    <alternativeName>
        <fullName evidence="2">50S ribosomal protein L25</fullName>
    </alternativeName>
    <alternativeName>
        <fullName evidence="1">General stress protein CTC</fullName>
    </alternativeName>
</protein>
<gene>
    <name evidence="1" type="primary">rplY</name>
    <name evidence="1" type="synonym">ctc</name>
    <name type="ordered locus">Plut_1342</name>
</gene>
<reference key="1">
    <citation type="submission" date="2005-08" db="EMBL/GenBank/DDBJ databases">
        <title>Complete sequence of Pelodictyon luteolum DSM 273.</title>
        <authorList>
            <consortium name="US DOE Joint Genome Institute"/>
            <person name="Copeland A."/>
            <person name="Lucas S."/>
            <person name="Lapidus A."/>
            <person name="Barry K."/>
            <person name="Detter J.C."/>
            <person name="Glavina T."/>
            <person name="Hammon N."/>
            <person name="Israni S."/>
            <person name="Pitluck S."/>
            <person name="Bryant D."/>
            <person name="Schmutz J."/>
            <person name="Larimer F."/>
            <person name="Land M."/>
            <person name="Kyrpides N."/>
            <person name="Ivanova N."/>
            <person name="Richardson P."/>
        </authorList>
    </citation>
    <scope>NUCLEOTIDE SEQUENCE [LARGE SCALE GENOMIC DNA]</scope>
    <source>
        <strain>DSM 273 / BCRC 81028 / 2530</strain>
    </source>
</reference>
<keyword id="KW-1185">Reference proteome</keyword>
<keyword id="KW-0687">Ribonucleoprotein</keyword>
<keyword id="KW-0689">Ribosomal protein</keyword>
<keyword id="KW-0694">RNA-binding</keyword>
<keyword id="KW-0699">rRNA-binding</keyword>
<evidence type="ECO:0000255" key="1">
    <source>
        <dbReference type="HAMAP-Rule" id="MF_01334"/>
    </source>
</evidence>
<evidence type="ECO:0000305" key="2"/>
<accession>Q3B380</accession>
<comment type="function">
    <text evidence="1">This is one of the proteins that binds to the 5S RNA in the ribosome where it forms part of the central protuberance.</text>
</comment>
<comment type="subunit">
    <text evidence="1">Part of the 50S ribosomal subunit; part of the 5S rRNA/L5/L18/L25 subcomplex. Contacts the 5S rRNA. Binds to the 5S rRNA independently of L5 and L18.</text>
</comment>
<comment type="similarity">
    <text evidence="1">Belongs to the bacterial ribosomal protein bL25 family. CTC subfamily.</text>
</comment>
<dbReference type="EMBL" id="CP000096">
    <property type="protein sequence ID" value="ABB24201.1"/>
    <property type="molecule type" value="Genomic_DNA"/>
</dbReference>
<dbReference type="RefSeq" id="WP_011358073.1">
    <property type="nucleotide sequence ID" value="NC_007512.1"/>
</dbReference>
<dbReference type="SMR" id="Q3B380"/>
<dbReference type="STRING" id="319225.Plut_1342"/>
<dbReference type="KEGG" id="plt:Plut_1342"/>
<dbReference type="eggNOG" id="COG1825">
    <property type="taxonomic scope" value="Bacteria"/>
</dbReference>
<dbReference type="HOGENOM" id="CLU_075939_2_1_10"/>
<dbReference type="OrthoDB" id="9786489at2"/>
<dbReference type="Proteomes" id="UP000002709">
    <property type="component" value="Chromosome"/>
</dbReference>
<dbReference type="GO" id="GO:0022625">
    <property type="term" value="C:cytosolic large ribosomal subunit"/>
    <property type="evidence" value="ECO:0007669"/>
    <property type="project" value="TreeGrafter"/>
</dbReference>
<dbReference type="GO" id="GO:0008097">
    <property type="term" value="F:5S rRNA binding"/>
    <property type="evidence" value="ECO:0007669"/>
    <property type="project" value="InterPro"/>
</dbReference>
<dbReference type="GO" id="GO:0003735">
    <property type="term" value="F:structural constituent of ribosome"/>
    <property type="evidence" value="ECO:0007669"/>
    <property type="project" value="InterPro"/>
</dbReference>
<dbReference type="GO" id="GO:0006412">
    <property type="term" value="P:translation"/>
    <property type="evidence" value="ECO:0007669"/>
    <property type="project" value="UniProtKB-UniRule"/>
</dbReference>
<dbReference type="CDD" id="cd00495">
    <property type="entry name" value="Ribosomal_L25_TL5_CTC"/>
    <property type="match status" value="1"/>
</dbReference>
<dbReference type="Gene3D" id="2.170.120.20">
    <property type="entry name" value="Ribosomal protein L25, beta domain"/>
    <property type="match status" value="1"/>
</dbReference>
<dbReference type="Gene3D" id="2.40.240.10">
    <property type="entry name" value="Ribosomal Protein L25, Chain P"/>
    <property type="match status" value="1"/>
</dbReference>
<dbReference type="HAMAP" id="MF_01334">
    <property type="entry name" value="Ribosomal_bL25_CTC"/>
    <property type="match status" value="1"/>
</dbReference>
<dbReference type="InterPro" id="IPR020056">
    <property type="entry name" value="Rbsml_bL25/Gln-tRNA_synth_N"/>
</dbReference>
<dbReference type="InterPro" id="IPR011035">
    <property type="entry name" value="Ribosomal_bL25/Gln-tRNA_synth"/>
</dbReference>
<dbReference type="InterPro" id="IPR020057">
    <property type="entry name" value="Ribosomal_bL25_b-dom"/>
</dbReference>
<dbReference type="InterPro" id="IPR037121">
    <property type="entry name" value="Ribosomal_bL25_C"/>
</dbReference>
<dbReference type="InterPro" id="IPR001021">
    <property type="entry name" value="Ribosomal_bL25_long"/>
</dbReference>
<dbReference type="InterPro" id="IPR029751">
    <property type="entry name" value="Ribosomal_L25_dom"/>
</dbReference>
<dbReference type="InterPro" id="IPR020930">
    <property type="entry name" value="Ribosomal_uL5_bac-type"/>
</dbReference>
<dbReference type="NCBIfam" id="TIGR00731">
    <property type="entry name" value="bL25_bact_ctc"/>
    <property type="match status" value="1"/>
</dbReference>
<dbReference type="NCBIfam" id="NF004136">
    <property type="entry name" value="PRK05618.3-2"/>
    <property type="match status" value="1"/>
</dbReference>
<dbReference type="PANTHER" id="PTHR33284">
    <property type="entry name" value="RIBOSOMAL PROTEIN L25/GLN-TRNA SYNTHETASE, ANTI-CODON-BINDING DOMAIN-CONTAINING PROTEIN"/>
    <property type="match status" value="1"/>
</dbReference>
<dbReference type="PANTHER" id="PTHR33284:SF1">
    <property type="entry name" value="RIBOSOMAL PROTEIN L25_GLN-TRNA SYNTHETASE, ANTI-CODON-BINDING DOMAIN-CONTAINING PROTEIN"/>
    <property type="match status" value="1"/>
</dbReference>
<dbReference type="Pfam" id="PF01386">
    <property type="entry name" value="Ribosomal_L25p"/>
    <property type="match status" value="1"/>
</dbReference>
<dbReference type="Pfam" id="PF14693">
    <property type="entry name" value="Ribosomal_TL5_C"/>
    <property type="match status" value="1"/>
</dbReference>
<dbReference type="SUPFAM" id="SSF50715">
    <property type="entry name" value="Ribosomal protein L25-like"/>
    <property type="match status" value="1"/>
</dbReference>